<reference key="1">
    <citation type="journal article" date="2004" name="Proc. Natl. Acad. Sci. U.S.A.">
        <title>Comparison of the genome of the oral pathogen Treponema denticola with other spirochete genomes.</title>
        <authorList>
            <person name="Seshadri R."/>
            <person name="Myers G.S.A."/>
            <person name="Tettelin H."/>
            <person name="Eisen J.A."/>
            <person name="Heidelberg J.F."/>
            <person name="Dodson R.J."/>
            <person name="Davidsen T.M."/>
            <person name="DeBoy R.T."/>
            <person name="Fouts D.E."/>
            <person name="Haft D.H."/>
            <person name="Selengut J."/>
            <person name="Ren Q."/>
            <person name="Brinkac L.M."/>
            <person name="Madupu R."/>
            <person name="Kolonay J.F."/>
            <person name="Durkin S.A."/>
            <person name="Daugherty S.C."/>
            <person name="Shetty J."/>
            <person name="Shvartsbeyn A."/>
            <person name="Gebregeorgis E."/>
            <person name="Geer K."/>
            <person name="Tsegaye G."/>
            <person name="Malek J.A."/>
            <person name="Ayodeji B."/>
            <person name="Shatsman S."/>
            <person name="McLeod M.P."/>
            <person name="Smajs D."/>
            <person name="Howell J.K."/>
            <person name="Pal S."/>
            <person name="Amin A."/>
            <person name="Vashisth P."/>
            <person name="McNeill T.Z."/>
            <person name="Xiang Q."/>
            <person name="Sodergren E."/>
            <person name="Baca E."/>
            <person name="Weinstock G.M."/>
            <person name="Norris S.J."/>
            <person name="Fraser C.M."/>
            <person name="Paulsen I.T."/>
        </authorList>
    </citation>
    <scope>NUCLEOTIDE SEQUENCE [LARGE SCALE GENOMIC DNA]</scope>
    <source>
        <strain>ATCC 35405 / DSM 14222 / CIP 103919 / JCM 8153 / KCTC 15104</strain>
    </source>
</reference>
<keyword id="KW-0067">ATP-binding</keyword>
<keyword id="KW-0436">Ligase</keyword>
<keyword id="KW-0547">Nucleotide-binding</keyword>
<keyword id="KW-0648">Protein biosynthesis</keyword>
<keyword id="KW-1185">Reference proteome</keyword>
<name>GATB_TREDE</name>
<gene>
    <name evidence="1" type="primary">gatB</name>
    <name type="ordered locus">TDE_0575</name>
</gene>
<dbReference type="EC" id="6.3.5.-" evidence="1"/>
<dbReference type="EMBL" id="AE017226">
    <property type="protein sequence ID" value="AAS11070.1"/>
    <property type="molecule type" value="Genomic_DNA"/>
</dbReference>
<dbReference type="RefSeq" id="NP_971189.1">
    <property type="nucleotide sequence ID" value="NC_002967.9"/>
</dbReference>
<dbReference type="RefSeq" id="WP_002681743.1">
    <property type="nucleotide sequence ID" value="NC_002967.9"/>
</dbReference>
<dbReference type="SMR" id="P61348"/>
<dbReference type="STRING" id="243275.TDE_0575"/>
<dbReference type="PaxDb" id="243275-TDE_0575"/>
<dbReference type="GeneID" id="2741011"/>
<dbReference type="KEGG" id="tde:TDE_0575"/>
<dbReference type="PATRIC" id="fig|243275.7.peg.558"/>
<dbReference type="eggNOG" id="COG0064">
    <property type="taxonomic scope" value="Bacteria"/>
</dbReference>
<dbReference type="HOGENOM" id="CLU_019240_0_0_12"/>
<dbReference type="OrthoDB" id="9804078at2"/>
<dbReference type="Proteomes" id="UP000008212">
    <property type="component" value="Chromosome"/>
</dbReference>
<dbReference type="GO" id="GO:0050566">
    <property type="term" value="F:asparaginyl-tRNA synthase (glutamine-hydrolyzing) activity"/>
    <property type="evidence" value="ECO:0007669"/>
    <property type="project" value="RHEA"/>
</dbReference>
<dbReference type="GO" id="GO:0005524">
    <property type="term" value="F:ATP binding"/>
    <property type="evidence" value="ECO:0007669"/>
    <property type="project" value="UniProtKB-KW"/>
</dbReference>
<dbReference type="GO" id="GO:0050567">
    <property type="term" value="F:glutaminyl-tRNA synthase (glutamine-hydrolyzing) activity"/>
    <property type="evidence" value="ECO:0007669"/>
    <property type="project" value="UniProtKB-UniRule"/>
</dbReference>
<dbReference type="GO" id="GO:0006412">
    <property type="term" value="P:translation"/>
    <property type="evidence" value="ECO:0007669"/>
    <property type="project" value="UniProtKB-UniRule"/>
</dbReference>
<dbReference type="FunFam" id="1.10.10.410:FF:000001">
    <property type="entry name" value="Aspartyl/glutamyl-tRNA(Asn/Gln) amidotransferase subunit B"/>
    <property type="match status" value="1"/>
</dbReference>
<dbReference type="Gene3D" id="1.10.10.410">
    <property type="match status" value="1"/>
</dbReference>
<dbReference type="Gene3D" id="1.10.150.380">
    <property type="entry name" value="GatB domain, N-terminal subdomain"/>
    <property type="match status" value="1"/>
</dbReference>
<dbReference type="HAMAP" id="MF_00121">
    <property type="entry name" value="GatB"/>
    <property type="match status" value="1"/>
</dbReference>
<dbReference type="InterPro" id="IPR017959">
    <property type="entry name" value="Asn/Gln-tRNA_amidoTrfase_suB/E"/>
</dbReference>
<dbReference type="InterPro" id="IPR006075">
    <property type="entry name" value="Asn/Gln-tRNA_Trfase_suB/E_cat"/>
</dbReference>
<dbReference type="InterPro" id="IPR018027">
    <property type="entry name" value="Asn/Gln_amidotransferase"/>
</dbReference>
<dbReference type="InterPro" id="IPR003789">
    <property type="entry name" value="Asn/Gln_tRNA_amidoTrase-B-like"/>
</dbReference>
<dbReference type="InterPro" id="IPR004413">
    <property type="entry name" value="GatB"/>
</dbReference>
<dbReference type="InterPro" id="IPR042114">
    <property type="entry name" value="GatB_C_1"/>
</dbReference>
<dbReference type="InterPro" id="IPR023168">
    <property type="entry name" value="GatB_Yqey_C_2"/>
</dbReference>
<dbReference type="InterPro" id="IPR017958">
    <property type="entry name" value="Gln-tRNA_amidoTrfase_suB_CS"/>
</dbReference>
<dbReference type="InterPro" id="IPR014746">
    <property type="entry name" value="Gln_synth/guanido_kin_cat_dom"/>
</dbReference>
<dbReference type="NCBIfam" id="TIGR00133">
    <property type="entry name" value="gatB"/>
    <property type="match status" value="1"/>
</dbReference>
<dbReference type="NCBIfam" id="NF004012">
    <property type="entry name" value="PRK05477.1-2"/>
    <property type="match status" value="1"/>
</dbReference>
<dbReference type="NCBIfam" id="NF004014">
    <property type="entry name" value="PRK05477.1-4"/>
    <property type="match status" value="1"/>
</dbReference>
<dbReference type="PANTHER" id="PTHR11659">
    <property type="entry name" value="GLUTAMYL-TRNA GLN AMIDOTRANSFERASE SUBUNIT B MITOCHONDRIAL AND PROKARYOTIC PET112-RELATED"/>
    <property type="match status" value="1"/>
</dbReference>
<dbReference type="Pfam" id="PF02934">
    <property type="entry name" value="GatB_N"/>
    <property type="match status" value="1"/>
</dbReference>
<dbReference type="Pfam" id="PF02637">
    <property type="entry name" value="GatB_Yqey"/>
    <property type="match status" value="1"/>
</dbReference>
<dbReference type="SMART" id="SM00845">
    <property type="entry name" value="GatB_Yqey"/>
    <property type="match status" value="1"/>
</dbReference>
<dbReference type="SUPFAM" id="SSF89095">
    <property type="entry name" value="GatB/YqeY motif"/>
    <property type="match status" value="1"/>
</dbReference>
<dbReference type="SUPFAM" id="SSF55931">
    <property type="entry name" value="Glutamine synthetase/guanido kinase"/>
    <property type="match status" value="1"/>
</dbReference>
<dbReference type="PROSITE" id="PS01234">
    <property type="entry name" value="GATB"/>
    <property type="match status" value="1"/>
</dbReference>
<accession>P61348</accession>
<proteinExistence type="inferred from homology"/>
<feature type="chain" id="PRO_0000148860" description="Aspartyl/glutamyl-tRNA(Asn/Gln) amidotransferase subunit B">
    <location>
        <begin position="1"/>
        <end position="493"/>
    </location>
</feature>
<feature type="region of interest" description="Disordered" evidence="2">
    <location>
        <begin position="473"/>
        <end position="493"/>
    </location>
</feature>
<sequence>MLKHGNLEYEIIIGCEIHCQLLTKTKAFCSCENRYGGIPNTRVCPCCLGLPGALPRVSKEYVEFGIKAGHALGCRINNFSKFDRKHYFYPDLVKGYQITQFYTPLCEEGEVEVNLAAQNEEPKFKKIRIERIHLEEDVGKSLHIEGSHSYIDFNRSGVPLIEIVSKPDMSTPDEAAKYMQTIREILKFIGVTDGNMEEGALRCDANVNLKIIDNGVEFRTPISEIKNMNSFKAVKDACTYEVSRQLEEYNSKDRIAFKTGFKRTMGWDEPSGQTVVQRTKTIAEDYRFMPEPDLRALELSDKFIKEVSDSVGELPEAKRLRFKKEYHLSEFDVQTLTSERELAEWFEEAAKKSSSPKKCANWILAEVLAILNETNSSLSDLKFGPEAIAELVNVIEEGKITSKQAKDVFAEMIACGKKPSAVIAEKGMEQVSDSSFIEKIVEEVFAENAEAVQDWKNGKTNVAGWLMGQVMKKSGGKANPKQAADLVNKRLTE</sequence>
<organism>
    <name type="scientific">Treponema denticola (strain ATCC 35405 / DSM 14222 / CIP 103919 / JCM 8153 / KCTC 15104)</name>
    <dbReference type="NCBI Taxonomy" id="243275"/>
    <lineage>
        <taxon>Bacteria</taxon>
        <taxon>Pseudomonadati</taxon>
        <taxon>Spirochaetota</taxon>
        <taxon>Spirochaetia</taxon>
        <taxon>Spirochaetales</taxon>
        <taxon>Treponemataceae</taxon>
        <taxon>Treponema</taxon>
    </lineage>
</organism>
<comment type="function">
    <text evidence="1">Allows the formation of correctly charged Asn-tRNA(Asn) or Gln-tRNA(Gln) through the transamidation of misacylated Asp-tRNA(Asn) or Glu-tRNA(Gln) in organisms which lack either or both of asparaginyl-tRNA or glutaminyl-tRNA synthetases. The reaction takes place in the presence of glutamine and ATP through an activated phospho-Asp-tRNA(Asn) or phospho-Glu-tRNA(Gln).</text>
</comment>
<comment type="catalytic activity">
    <reaction evidence="1">
        <text>L-glutamyl-tRNA(Gln) + L-glutamine + ATP + H2O = L-glutaminyl-tRNA(Gln) + L-glutamate + ADP + phosphate + H(+)</text>
        <dbReference type="Rhea" id="RHEA:17521"/>
        <dbReference type="Rhea" id="RHEA-COMP:9681"/>
        <dbReference type="Rhea" id="RHEA-COMP:9684"/>
        <dbReference type="ChEBI" id="CHEBI:15377"/>
        <dbReference type="ChEBI" id="CHEBI:15378"/>
        <dbReference type="ChEBI" id="CHEBI:29985"/>
        <dbReference type="ChEBI" id="CHEBI:30616"/>
        <dbReference type="ChEBI" id="CHEBI:43474"/>
        <dbReference type="ChEBI" id="CHEBI:58359"/>
        <dbReference type="ChEBI" id="CHEBI:78520"/>
        <dbReference type="ChEBI" id="CHEBI:78521"/>
        <dbReference type="ChEBI" id="CHEBI:456216"/>
    </reaction>
</comment>
<comment type="catalytic activity">
    <reaction evidence="1">
        <text>L-aspartyl-tRNA(Asn) + L-glutamine + ATP + H2O = L-asparaginyl-tRNA(Asn) + L-glutamate + ADP + phosphate + 2 H(+)</text>
        <dbReference type="Rhea" id="RHEA:14513"/>
        <dbReference type="Rhea" id="RHEA-COMP:9674"/>
        <dbReference type="Rhea" id="RHEA-COMP:9677"/>
        <dbReference type="ChEBI" id="CHEBI:15377"/>
        <dbReference type="ChEBI" id="CHEBI:15378"/>
        <dbReference type="ChEBI" id="CHEBI:29985"/>
        <dbReference type="ChEBI" id="CHEBI:30616"/>
        <dbReference type="ChEBI" id="CHEBI:43474"/>
        <dbReference type="ChEBI" id="CHEBI:58359"/>
        <dbReference type="ChEBI" id="CHEBI:78515"/>
        <dbReference type="ChEBI" id="CHEBI:78516"/>
        <dbReference type="ChEBI" id="CHEBI:456216"/>
    </reaction>
</comment>
<comment type="subunit">
    <text evidence="1">Heterotrimer of A, B and C subunits.</text>
</comment>
<comment type="similarity">
    <text evidence="1">Belongs to the GatB/GatE family. GatB subfamily.</text>
</comment>
<evidence type="ECO:0000255" key="1">
    <source>
        <dbReference type="HAMAP-Rule" id="MF_00121"/>
    </source>
</evidence>
<evidence type="ECO:0000256" key="2">
    <source>
        <dbReference type="SAM" id="MobiDB-lite"/>
    </source>
</evidence>
<protein>
    <recommendedName>
        <fullName evidence="1">Aspartyl/glutamyl-tRNA(Asn/Gln) amidotransferase subunit B</fullName>
        <shortName evidence="1">Asp/Glu-ADT subunit B</shortName>
        <ecNumber evidence="1">6.3.5.-</ecNumber>
    </recommendedName>
</protein>